<evidence type="ECO:0000250" key="1">
    <source>
        <dbReference type="UniProtKB" id="D4A8G9"/>
    </source>
</evidence>
<evidence type="ECO:0000250" key="2">
    <source>
        <dbReference type="UniProtKB" id="Q5DU37"/>
    </source>
</evidence>
<evidence type="ECO:0000255" key="3"/>
<evidence type="ECO:0000255" key="4">
    <source>
        <dbReference type="PROSITE-ProRule" id="PRU00091"/>
    </source>
</evidence>
<evidence type="ECO:0000256" key="5">
    <source>
        <dbReference type="SAM" id="MobiDB-lite"/>
    </source>
</evidence>
<evidence type="ECO:0000269" key="6">
    <source>
    </source>
</evidence>
<evidence type="ECO:0000269" key="7">
    <source>
    </source>
</evidence>
<evidence type="ECO:0000269" key="8">
    <source>
    </source>
</evidence>
<evidence type="ECO:0000269" key="9">
    <source>
    </source>
</evidence>
<evidence type="ECO:0000269" key="10">
    <source>
    </source>
</evidence>
<evidence type="ECO:0000269" key="11">
    <source>
    </source>
</evidence>
<evidence type="ECO:0000269" key="12">
    <source>
    </source>
</evidence>
<evidence type="ECO:0000269" key="13">
    <source>
    </source>
</evidence>
<evidence type="ECO:0000269" key="14">
    <source>
    </source>
</evidence>
<evidence type="ECO:0000303" key="15">
    <source>
    </source>
</evidence>
<evidence type="ECO:0000303" key="16">
    <source>
    </source>
</evidence>
<evidence type="ECO:0000305" key="17"/>
<evidence type="ECO:0007744" key="18">
    <source>
    </source>
</evidence>
<organism>
    <name type="scientific">Homo sapiens</name>
    <name type="common">Human</name>
    <dbReference type="NCBI Taxonomy" id="9606"/>
    <lineage>
        <taxon>Eukaryota</taxon>
        <taxon>Metazoa</taxon>
        <taxon>Chordata</taxon>
        <taxon>Craniata</taxon>
        <taxon>Vertebrata</taxon>
        <taxon>Euteleostomi</taxon>
        <taxon>Mammalia</taxon>
        <taxon>Eutheria</taxon>
        <taxon>Euarchontoglires</taxon>
        <taxon>Primates</taxon>
        <taxon>Haplorrhini</taxon>
        <taxon>Catarrhini</taxon>
        <taxon>Hominidae</taxon>
        <taxon>Homo</taxon>
    </lineage>
</organism>
<name>ZFY26_HUMAN</name>
<accession>Q68DK2</accession>
<accession>B1B5Y3</accession>
<accession>B4E2U3</accession>
<accession>O15035</accession>
<accession>Q68DT9</accession>
<accession>Q6AW90</accession>
<accession>Q6ZR50</accession>
<accession>Q7Z3A4</accession>
<accession>Q7Z3I1</accession>
<accession>Q8N4W7</accession>
<accession>Q96H43</accession>
<gene>
    <name type="primary">ZFYVE26</name>
    <name type="synonym">KIAA0321</name>
</gene>
<protein>
    <recommendedName>
        <fullName>Zinc finger FYVE domain-containing protein 26</fullName>
    </recommendedName>
    <alternativeName>
        <fullName>FYVE domain-containing centrosomal protein</fullName>
        <shortName>FYVE-CENT</shortName>
    </alternativeName>
    <alternativeName>
        <fullName>Spastizin</fullName>
    </alternativeName>
</protein>
<proteinExistence type="evidence at protein level"/>
<keyword id="KW-0025">Alternative splicing</keyword>
<keyword id="KW-0131">Cell cycle</keyword>
<keyword id="KW-0132">Cell division</keyword>
<keyword id="KW-0175">Coiled coil</keyword>
<keyword id="KW-0963">Cytoplasm</keyword>
<keyword id="KW-0206">Cytoskeleton</keyword>
<keyword id="KW-0227">DNA damage</keyword>
<keyword id="KW-0234">DNA repair</keyword>
<keyword id="KW-0890">Hereditary spastic paraplegia</keyword>
<keyword id="KW-0446">Lipid-binding</keyword>
<keyword id="KW-0479">Metal-binding</keyword>
<keyword id="KW-0523">Neurodegeneration</keyword>
<keyword id="KW-0597">Phosphoprotein</keyword>
<keyword id="KW-1267">Proteomics identification</keyword>
<keyword id="KW-1185">Reference proteome</keyword>
<keyword id="KW-0862">Zinc</keyword>
<keyword id="KW-0863">Zinc-finger</keyword>
<reference key="1">
    <citation type="journal article" date="1997" name="DNA Res.">
        <title>Prediction of the coding sequences of unidentified human genes. VII. The complete sequences of 100 new cDNA clones from brain which can code for large proteins in vitro.</title>
        <authorList>
            <person name="Nagase T."/>
            <person name="Ishikawa K."/>
            <person name="Nakajima D."/>
            <person name="Ohira M."/>
            <person name="Seki N."/>
            <person name="Miyajima N."/>
            <person name="Tanaka A."/>
            <person name="Kotani H."/>
            <person name="Nomura N."/>
            <person name="Ohara O."/>
        </authorList>
    </citation>
    <scope>NUCLEOTIDE SEQUENCE [LARGE SCALE MRNA] (ISOFORM 1)</scope>
    <scope>VARIANTS TYR-1457 AND SER-1891</scope>
    <source>
        <tissue>Brain</tissue>
    </source>
</reference>
<reference key="2">
    <citation type="journal article" date="2004" name="Nat. Genet.">
        <title>Complete sequencing and characterization of 21,243 full-length human cDNAs.</title>
        <authorList>
            <person name="Ota T."/>
            <person name="Suzuki Y."/>
            <person name="Nishikawa T."/>
            <person name="Otsuki T."/>
            <person name="Sugiyama T."/>
            <person name="Irie R."/>
            <person name="Wakamatsu A."/>
            <person name="Hayashi K."/>
            <person name="Sato H."/>
            <person name="Nagai K."/>
            <person name="Kimura K."/>
            <person name="Makita H."/>
            <person name="Sekine M."/>
            <person name="Obayashi M."/>
            <person name="Nishi T."/>
            <person name="Shibahara T."/>
            <person name="Tanaka T."/>
            <person name="Ishii S."/>
            <person name="Yamamoto J."/>
            <person name="Saito K."/>
            <person name="Kawai Y."/>
            <person name="Isono Y."/>
            <person name="Nakamura Y."/>
            <person name="Nagahari K."/>
            <person name="Murakami K."/>
            <person name="Yasuda T."/>
            <person name="Iwayanagi T."/>
            <person name="Wagatsuma M."/>
            <person name="Shiratori A."/>
            <person name="Sudo H."/>
            <person name="Hosoiri T."/>
            <person name="Kaku Y."/>
            <person name="Kodaira H."/>
            <person name="Kondo H."/>
            <person name="Sugawara M."/>
            <person name="Takahashi M."/>
            <person name="Kanda K."/>
            <person name="Yokoi T."/>
            <person name="Furuya T."/>
            <person name="Kikkawa E."/>
            <person name="Omura Y."/>
            <person name="Abe K."/>
            <person name="Kamihara K."/>
            <person name="Katsuta N."/>
            <person name="Sato K."/>
            <person name="Tanikawa M."/>
            <person name="Yamazaki M."/>
            <person name="Ninomiya K."/>
            <person name="Ishibashi T."/>
            <person name="Yamashita H."/>
            <person name="Murakawa K."/>
            <person name="Fujimori K."/>
            <person name="Tanai H."/>
            <person name="Kimata M."/>
            <person name="Watanabe M."/>
            <person name="Hiraoka S."/>
            <person name="Chiba Y."/>
            <person name="Ishida S."/>
            <person name="Ono Y."/>
            <person name="Takiguchi S."/>
            <person name="Watanabe S."/>
            <person name="Yosida M."/>
            <person name="Hotuta T."/>
            <person name="Kusano J."/>
            <person name="Kanehori K."/>
            <person name="Takahashi-Fujii A."/>
            <person name="Hara H."/>
            <person name="Tanase T.-O."/>
            <person name="Nomura Y."/>
            <person name="Togiya S."/>
            <person name="Komai F."/>
            <person name="Hara R."/>
            <person name="Takeuchi K."/>
            <person name="Arita M."/>
            <person name="Imose N."/>
            <person name="Musashino K."/>
            <person name="Yuuki H."/>
            <person name="Oshima A."/>
            <person name="Sasaki N."/>
            <person name="Aotsuka S."/>
            <person name="Yoshikawa Y."/>
            <person name="Matsunawa H."/>
            <person name="Ichihara T."/>
            <person name="Shiohata N."/>
            <person name="Sano S."/>
            <person name="Moriya S."/>
            <person name="Momiyama H."/>
            <person name="Satoh N."/>
            <person name="Takami S."/>
            <person name="Terashima Y."/>
            <person name="Suzuki O."/>
            <person name="Nakagawa S."/>
            <person name="Senoh A."/>
            <person name="Mizoguchi H."/>
            <person name="Goto Y."/>
            <person name="Shimizu F."/>
            <person name="Wakebe H."/>
            <person name="Hishigaki H."/>
            <person name="Watanabe T."/>
            <person name="Sugiyama A."/>
            <person name="Takemoto M."/>
            <person name="Kawakami B."/>
            <person name="Yamazaki M."/>
            <person name="Watanabe K."/>
            <person name="Kumagai A."/>
            <person name="Itakura S."/>
            <person name="Fukuzumi Y."/>
            <person name="Fujimori Y."/>
            <person name="Komiyama M."/>
            <person name="Tashiro H."/>
            <person name="Tanigami A."/>
            <person name="Fujiwara T."/>
            <person name="Ono T."/>
            <person name="Yamada K."/>
            <person name="Fujii Y."/>
            <person name="Ozaki K."/>
            <person name="Hirao M."/>
            <person name="Ohmori Y."/>
            <person name="Kawabata A."/>
            <person name="Hikiji T."/>
            <person name="Kobatake N."/>
            <person name="Inagaki H."/>
            <person name="Ikema Y."/>
            <person name="Okamoto S."/>
            <person name="Okitani R."/>
            <person name="Kawakami T."/>
            <person name="Noguchi S."/>
            <person name="Itoh T."/>
            <person name="Shigeta K."/>
            <person name="Senba T."/>
            <person name="Matsumura K."/>
            <person name="Nakajima Y."/>
            <person name="Mizuno T."/>
            <person name="Morinaga M."/>
            <person name="Sasaki M."/>
            <person name="Togashi T."/>
            <person name="Oyama M."/>
            <person name="Hata H."/>
            <person name="Watanabe M."/>
            <person name="Komatsu T."/>
            <person name="Mizushima-Sugano J."/>
            <person name="Satoh T."/>
            <person name="Shirai Y."/>
            <person name="Takahashi Y."/>
            <person name="Nakagawa K."/>
            <person name="Okumura K."/>
            <person name="Nagase T."/>
            <person name="Nomura N."/>
            <person name="Kikuchi H."/>
            <person name="Masuho Y."/>
            <person name="Yamashita R."/>
            <person name="Nakai K."/>
            <person name="Yada T."/>
            <person name="Nakamura Y."/>
            <person name="Ohara O."/>
            <person name="Isogai T."/>
            <person name="Sugano S."/>
        </authorList>
    </citation>
    <scope>NUCLEOTIDE SEQUENCE [LARGE SCALE MRNA] (ISOFORMS 3 AND 4)</scope>
    <scope>VARIANT SER-1891</scope>
    <source>
        <tissue>Trachea</tissue>
    </source>
</reference>
<reference key="3">
    <citation type="journal article" date="2007" name="BMC Genomics">
        <title>The full-ORF clone resource of the German cDNA consortium.</title>
        <authorList>
            <person name="Bechtel S."/>
            <person name="Rosenfelder H."/>
            <person name="Duda A."/>
            <person name="Schmidt C.P."/>
            <person name="Ernst U."/>
            <person name="Wellenreuther R."/>
            <person name="Mehrle A."/>
            <person name="Schuster C."/>
            <person name="Bahr A."/>
            <person name="Bloecker H."/>
            <person name="Heubner D."/>
            <person name="Hoerlein A."/>
            <person name="Michel G."/>
            <person name="Wedler H."/>
            <person name="Koehrer K."/>
            <person name="Ottenwaelder B."/>
            <person name="Poustka A."/>
            <person name="Wiemann S."/>
            <person name="Schupp I."/>
        </authorList>
    </citation>
    <scope>NUCLEOTIDE SEQUENCE [LARGE SCALE MRNA] (ISOFORMS 1 AND 2)</scope>
    <scope>VARIANTS LEU-1103; TYR-1457 AND SER-1891</scope>
    <source>
        <tissue>Cervix</tissue>
        <tissue>Endometrial adenocarcinoma</tissue>
        <tissue>Fetal kidney</tissue>
    </source>
</reference>
<reference key="4">
    <citation type="journal article" date="2003" name="Nature">
        <title>The DNA sequence and analysis of human chromosome 14.</title>
        <authorList>
            <person name="Heilig R."/>
            <person name="Eckenberg R."/>
            <person name="Petit J.-L."/>
            <person name="Fonknechten N."/>
            <person name="Da Silva C."/>
            <person name="Cattolico L."/>
            <person name="Levy M."/>
            <person name="Barbe V."/>
            <person name="De Berardinis V."/>
            <person name="Ureta-Vidal A."/>
            <person name="Pelletier E."/>
            <person name="Vico V."/>
            <person name="Anthouard V."/>
            <person name="Rowen L."/>
            <person name="Madan A."/>
            <person name="Qin S."/>
            <person name="Sun H."/>
            <person name="Du H."/>
            <person name="Pepin K."/>
            <person name="Artiguenave F."/>
            <person name="Robert C."/>
            <person name="Cruaud C."/>
            <person name="Bruels T."/>
            <person name="Jaillon O."/>
            <person name="Friedlander L."/>
            <person name="Samson G."/>
            <person name="Brottier P."/>
            <person name="Cure S."/>
            <person name="Segurens B."/>
            <person name="Aniere F."/>
            <person name="Samain S."/>
            <person name="Crespeau H."/>
            <person name="Abbasi N."/>
            <person name="Aiach N."/>
            <person name="Boscus D."/>
            <person name="Dickhoff R."/>
            <person name="Dors M."/>
            <person name="Dubois I."/>
            <person name="Friedman C."/>
            <person name="Gouyvenoux M."/>
            <person name="James R."/>
            <person name="Madan A."/>
            <person name="Mairey-Estrada B."/>
            <person name="Mangenot S."/>
            <person name="Martins N."/>
            <person name="Menard M."/>
            <person name="Oztas S."/>
            <person name="Ratcliffe A."/>
            <person name="Shaffer T."/>
            <person name="Trask B."/>
            <person name="Vacherie B."/>
            <person name="Bellemere C."/>
            <person name="Belser C."/>
            <person name="Besnard-Gonnet M."/>
            <person name="Bartol-Mavel D."/>
            <person name="Boutard M."/>
            <person name="Briez-Silla S."/>
            <person name="Combette S."/>
            <person name="Dufosse-Laurent V."/>
            <person name="Ferron C."/>
            <person name="Lechaplais C."/>
            <person name="Louesse C."/>
            <person name="Muselet D."/>
            <person name="Magdelenat G."/>
            <person name="Pateau E."/>
            <person name="Petit E."/>
            <person name="Sirvain-Trukniewicz P."/>
            <person name="Trybou A."/>
            <person name="Vega-Czarny N."/>
            <person name="Bataille E."/>
            <person name="Bluet E."/>
            <person name="Bordelais I."/>
            <person name="Dubois M."/>
            <person name="Dumont C."/>
            <person name="Guerin T."/>
            <person name="Haffray S."/>
            <person name="Hammadi R."/>
            <person name="Muanga J."/>
            <person name="Pellouin V."/>
            <person name="Robert D."/>
            <person name="Wunderle E."/>
            <person name="Gauguet G."/>
            <person name="Roy A."/>
            <person name="Sainte-Marthe L."/>
            <person name="Verdier J."/>
            <person name="Verdier-Discala C."/>
            <person name="Hillier L.W."/>
            <person name="Fulton L."/>
            <person name="McPherson J."/>
            <person name="Matsuda F."/>
            <person name="Wilson R."/>
            <person name="Scarpelli C."/>
            <person name="Gyapay G."/>
            <person name="Wincker P."/>
            <person name="Saurin W."/>
            <person name="Quetier F."/>
            <person name="Waterston R."/>
            <person name="Hood L."/>
            <person name="Weissenbach J."/>
        </authorList>
    </citation>
    <scope>NUCLEOTIDE SEQUENCE [LARGE SCALE GENOMIC DNA]</scope>
</reference>
<reference key="5">
    <citation type="submission" date="2005-07" db="EMBL/GenBank/DDBJ databases">
        <authorList>
            <person name="Mural R.J."/>
            <person name="Istrail S."/>
            <person name="Sutton G.G."/>
            <person name="Florea L."/>
            <person name="Halpern A.L."/>
            <person name="Mobarry C.M."/>
            <person name="Lippert R."/>
            <person name="Walenz B."/>
            <person name="Shatkay H."/>
            <person name="Dew I."/>
            <person name="Miller J.R."/>
            <person name="Flanigan M.J."/>
            <person name="Edwards N.J."/>
            <person name="Bolanos R."/>
            <person name="Fasulo D."/>
            <person name="Halldorsson B.V."/>
            <person name="Hannenhalli S."/>
            <person name="Turner R."/>
            <person name="Yooseph S."/>
            <person name="Lu F."/>
            <person name="Nusskern D.R."/>
            <person name="Shue B.C."/>
            <person name="Zheng X.H."/>
            <person name="Zhong F."/>
            <person name="Delcher A.L."/>
            <person name="Huson D.H."/>
            <person name="Kravitz S.A."/>
            <person name="Mouchard L."/>
            <person name="Reinert K."/>
            <person name="Remington K.A."/>
            <person name="Clark A.G."/>
            <person name="Waterman M.S."/>
            <person name="Eichler E.E."/>
            <person name="Adams M.D."/>
            <person name="Hunkapiller M.W."/>
            <person name="Myers E.W."/>
            <person name="Venter J.C."/>
        </authorList>
    </citation>
    <scope>NUCLEOTIDE SEQUENCE [LARGE SCALE GENOMIC DNA]</scope>
</reference>
<reference key="6">
    <citation type="journal article" date="2004" name="Genome Res.">
        <title>The status, quality, and expansion of the NIH full-length cDNA project: the Mammalian Gene Collection (MGC).</title>
        <authorList>
            <consortium name="The MGC Project Team"/>
        </authorList>
    </citation>
    <scope>NUCLEOTIDE SEQUENCE [LARGE SCALE MRNA] OF 2057-2539</scope>
    <scope>NUCLEOTIDE SEQUENCE [LARGE SCALE MRNA] OF 2155-2539 (ISOFORM 5)</scope>
    <source>
        <tissue>Brain</tissue>
        <tissue>Ovary</tissue>
    </source>
</reference>
<reference key="7">
    <citation type="journal article" date="2008" name="Am. J. Hum. Genet.">
        <title>Identification of the SPG15 gene, encoding spastizin, as a frequent cause of complicated autosomal-recessive spastic paraplegia, including Kjellin syndrome.</title>
        <authorList>
            <person name="Hanein S."/>
            <person name="Martin E."/>
            <person name="Boukhris A."/>
            <person name="Byrne P."/>
            <person name="Goizet C."/>
            <person name="Hamri A."/>
            <person name="Benomar A."/>
            <person name="Lossos A."/>
            <person name="Denora P."/>
            <person name="Fernandez J."/>
            <person name="Elleuch N."/>
            <person name="Forlani S."/>
            <person name="Durr A."/>
            <person name="Feki I."/>
            <person name="Hutchinson M."/>
            <person name="Santorelli F.M."/>
            <person name="Mhiri C."/>
            <person name="Brice A."/>
            <person name="Stevanin G."/>
        </authorList>
    </citation>
    <scope>INVOLVEMENT IN SPG15</scope>
    <scope>TISSUE SPECIFICITY</scope>
</reference>
<reference key="8">
    <citation type="journal article" date="2008" name="Proc. Natl. Acad. Sci. U.S.A.">
        <title>A quantitative atlas of mitotic phosphorylation.</title>
        <authorList>
            <person name="Dephoure N."/>
            <person name="Zhou C."/>
            <person name="Villen J."/>
            <person name="Beausoleil S.A."/>
            <person name="Bakalarski C.E."/>
            <person name="Elledge S.J."/>
            <person name="Gygi S.P."/>
        </authorList>
    </citation>
    <scope>IDENTIFICATION BY MASS SPECTROMETRY [LARGE SCALE ANALYSIS]</scope>
    <source>
        <tissue>Cervix carcinoma</tissue>
    </source>
</reference>
<reference key="9">
    <citation type="journal article" date="2009" name="J. Neurol. Sci.">
        <title>Spastic paraplegia with thinning of the corpus callosum and white matter abnormalities: further mutations and relative frequency in ZFYVE26/SPG15 in the Italian population.</title>
        <authorList>
            <person name="Denora P.S."/>
            <person name="Muglia M."/>
            <person name="Casali C."/>
            <person name="Truchetto J."/>
            <person name="Silvestri G."/>
            <person name="Messina D."/>
            <person name="Boukrhis A."/>
            <person name="Magariello A."/>
            <person name="Modoni A."/>
            <person name="Masciullo M."/>
            <person name="Malandrini A."/>
            <person name="Morelli M."/>
            <person name="de Leva M.F."/>
            <person name="Villanova M."/>
            <person name="Giugni E."/>
            <person name="Citrigno L."/>
            <person name="Rizza T."/>
            <person name="Federico A."/>
            <person name="Pierallini A."/>
            <person name="Quattrone A."/>
            <person name="Filla A."/>
            <person name="Brice A."/>
            <person name="Stevanin G."/>
            <person name="Santorelli F.M."/>
        </authorList>
    </citation>
    <scope>INVOLVEMENT IN SPG15</scope>
</reference>
<reference key="10">
    <citation type="journal article" date="2009" name="Neurology">
        <title>SPG15 is the second most common cause of hereditary spastic paraplegia with thin corpus callosum.</title>
        <authorList>
            <person name="Goizet C."/>
            <person name="Boukhris A."/>
            <person name="Maltete D."/>
            <person name="Guyant-Marechal L."/>
            <person name="Truchetto J."/>
            <person name="Mundwiller E."/>
            <person name="Hanein S."/>
            <person name="Jonveaux P."/>
            <person name="Roelens F."/>
            <person name="Loureiro J."/>
            <person name="Godet E."/>
            <person name="Forlani S."/>
            <person name="Melki J."/>
            <person name="Auer-Grumbach M."/>
            <person name="Fernandez J.C."/>
            <person name="Martin-Hardy P."/>
            <person name="Sibon I."/>
            <person name="Sole G."/>
            <person name="Orignac I."/>
            <person name="Mhiri C."/>
            <person name="Coutinho P."/>
            <person name="Durr A."/>
            <person name="Brice A."/>
            <person name="Stevanin G."/>
        </authorList>
    </citation>
    <scope>INVOLVEMENT IN SPG15</scope>
</reference>
<reference key="11">
    <citation type="journal article" date="2010" name="Nat. Cell Biol.">
        <title>PtdIns(3)P controls cytokinesis through KIF13A-mediated recruitment of FYVE-CENT to the midbody.</title>
        <authorList>
            <person name="Sagona A.P."/>
            <person name="Nezis I.P."/>
            <person name="Pedersen N.M."/>
            <person name="Liestol K."/>
            <person name="Poulton J."/>
            <person name="Rusten T.E."/>
            <person name="Skotheim R.I."/>
            <person name="Raiborg C."/>
            <person name="Stenmark H."/>
        </authorList>
    </citation>
    <scope>FUNCTION</scope>
    <scope>SUBCELLULAR LOCATION</scope>
    <scope>PHOSPHATIDYLINOSITOL 3-PHOSPHATE-BINDING</scope>
    <scope>DOMAIN FYVE-TYPE ZINC-FINGER</scope>
    <scope>INTERACTION WITH TTC19 AND KIF13A</scope>
    <scope>MUTAGENESIS OF ARG-1836</scope>
</reference>
<reference key="12">
    <citation type="journal article" date="2010" name="PLoS Biol.">
        <title>A genome-scale DNA repair RNAi screen identifies SPG48 as a novel gene associated with hereditary spastic paraplegia.</title>
        <authorList>
            <person name="Slabicki M."/>
            <person name="Theis M."/>
            <person name="Krastev D.B."/>
            <person name="Samsonov S."/>
            <person name="Mundwiller E."/>
            <person name="Junqueira M."/>
            <person name="Paszkowski-Rogacz M."/>
            <person name="Teyra J."/>
            <person name="Heninger A.K."/>
            <person name="Poser I."/>
            <person name="Prieur F."/>
            <person name="Truchetto J."/>
            <person name="Confavreux C."/>
            <person name="Marelli C."/>
            <person name="Durr A."/>
            <person name="Camdessanche J.P."/>
            <person name="Brice A."/>
            <person name="Shevchenko A."/>
            <person name="Pisabarro M.T."/>
            <person name="Stevanin G."/>
            <person name="Buchholz F."/>
        </authorList>
    </citation>
    <scope>POSSIBLE FUNCTION</scope>
    <scope>INTERACTION WITH AP5Z1; AP5B1; AP5S1 AND SPG11</scope>
</reference>
<reference key="13">
    <citation type="journal article" date="2013" name="J. Proteome Res.">
        <title>Toward a comprehensive characterization of a human cancer cell phosphoproteome.</title>
        <authorList>
            <person name="Zhou H."/>
            <person name="Di Palma S."/>
            <person name="Preisinger C."/>
            <person name="Peng M."/>
            <person name="Polat A.N."/>
            <person name="Heck A.J."/>
            <person name="Mohammed S."/>
        </authorList>
    </citation>
    <scope>PHOSPHORYLATION [LARGE SCALE ANALYSIS] AT SER-297; SER-619; SER-703; SER-800 AND SER-1764</scope>
    <scope>IDENTIFICATION BY MASS SPECTROMETRY [LARGE SCALE ANALYSIS]</scope>
    <source>
        <tissue>Cervix carcinoma</tissue>
        <tissue>Erythroleukemia</tissue>
    </source>
</reference>
<reference key="14">
    <citation type="journal article" date="2014" name="J. Proteomics">
        <title>An enzyme assisted RP-RPLC approach for in-depth analysis of human liver phosphoproteome.</title>
        <authorList>
            <person name="Bian Y."/>
            <person name="Song C."/>
            <person name="Cheng K."/>
            <person name="Dong M."/>
            <person name="Wang F."/>
            <person name="Huang J."/>
            <person name="Sun D."/>
            <person name="Wang L."/>
            <person name="Ye M."/>
            <person name="Zou H."/>
        </authorList>
    </citation>
    <scope>IDENTIFICATION BY MASS SPECTROMETRY [LARGE SCALE ANALYSIS]</scope>
    <source>
        <tissue>Liver</tissue>
    </source>
</reference>
<reference key="15">
    <citation type="journal article" date="2006" name="Science">
        <title>The consensus coding sequences of human breast and colorectal cancers.</title>
        <authorList>
            <person name="Sjoeblom T."/>
            <person name="Jones S."/>
            <person name="Wood L.D."/>
            <person name="Parsons D.W."/>
            <person name="Lin J."/>
            <person name="Barber T.D."/>
            <person name="Mandelker D."/>
            <person name="Leary R.J."/>
            <person name="Ptak J."/>
            <person name="Silliman N."/>
            <person name="Szabo S."/>
            <person name="Buckhaults P."/>
            <person name="Farrell C."/>
            <person name="Meeh P."/>
            <person name="Markowitz S.D."/>
            <person name="Willis J."/>
            <person name="Dawson D."/>
            <person name="Willson J.K.V."/>
            <person name="Gazdar A.F."/>
            <person name="Hartigan J."/>
            <person name="Wu L."/>
            <person name="Liu C."/>
            <person name="Parmigiani G."/>
            <person name="Park B.H."/>
            <person name="Bachman K.E."/>
            <person name="Papadopoulos N."/>
            <person name="Vogelstein B."/>
            <person name="Kinzler K.W."/>
            <person name="Velculescu V.E."/>
        </authorList>
    </citation>
    <scope>VARIANTS [LARGE SCALE ANALYSIS] GLU-1164 AND GLN-1945</scope>
</reference>
<comment type="function">
    <text evidence="12">Phosphatidylinositol 3-phosphate-binding protein required for the abscission step in cytokinesis: recruited to the midbody during cytokinesis and acts as a regulator of abscission. May also be required for efficient homologous recombination DNA double-strand break repair.</text>
</comment>
<comment type="subunit">
    <text evidence="12 13">Interacts with AP5Z1, AP5B1, AP5S1 and SPG11. Interacts with TTC19 and KIF13A.</text>
</comment>
<comment type="interaction">
    <interactant intactId="EBI-8656416">
        <id>Q68DK2-5</id>
    </interactant>
    <interactant intactId="EBI-3905054">
        <id>P13196</id>
        <label>ALAS1</label>
    </interactant>
    <organismsDiffer>false</organismsDiffer>
    <experiments>3</experiments>
</comment>
<comment type="interaction">
    <interactant intactId="EBI-8656416">
        <id>Q68DK2-5</id>
    </interactant>
    <interactant intactId="EBI-12809012">
        <id>Q8WXK1</id>
        <label>ASB15</label>
    </interactant>
    <organismsDiffer>false</organismsDiffer>
    <experiments>3</experiments>
</comment>
<comment type="interaction">
    <interactant intactId="EBI-8656416">
        <id>Q68DK2-5</id>
    </interactant>
    <interactant intactId="EBI-11524851">
        <id>Q8NA61-2</id>
        <label>CBY2</label>
    </interactant>
    <organismsDiffer>false</organismsDiffer>
    <experiments>3</experiments>
</comment>
<comment type="interaction">
    <interactant intactId="EBI-8656416">
        <id>Q68DK2-5</id>
    </interactant>
    <interactant intactId="EBI-11977221">
        <id>Q86Z20</id>
        <label>CCDC125</label>
    </interactant>
    <organismsDiffer>false</organismsDiffer>
    <experiments>3</experiments>
</comment>
<comment type="interaction">
    <interactant intactId="EBI-8656416">
        <id>Q68DK2-5</id>
    </interactant>
    <interactant intactId="EBI-744115">
        <id>Q9C0F1</id>
        <label>CEP44</label>
    </interactant>
    <organismsDiffer>false</organismsDiffer>
    <experiments>6</experiments>
</comment>
<comment type="interaction">
    <interactant intactId="EBI-8656416">
        <id>Q68DK2-5</id>
    </interactant>
    <interactant intactId="EBI-618309">
        <id>Q08379</id>
        <label>GOLGA2</label>
    </interactant>
    <organismsDiffer>false</organismsDiffer>
    <experiments>3</experiments>
</comment>
<comment type="interaction">
    <interactant intactId="EBI-8656416">
        <id>Q68DK2-5</id>
    </interactant>
    <interactant intactId="EBI-473189">
        <id>Q96D09</id>
        <label>GPRASP2</label>
    </interactant>
    <organismsDiffer>false</organismsDiffer>
    <experiments>3</experiments>
</comment>
<comment type="interaction">
    <interactant intactId="EBI-8656416">
        <id>Q68DK2-5</id>
    </interactant>
    <interactant intactId="EBI-2549423">
        <id>Q6NT76</id>
        <label>HMBOX1</label>
    </interactant>
    <organismsDiffer>false</organismsDiffer>
    <experiments>3</experiments>
</comment>
<comment type="interaction">
    <interactant intactId="EBI-8656416">
        <id>Q68DK2-5</id>
    </interactant>
    <interactant intactId="EBI-357966">
        <id>P07910</id>
        <label>HNRNPC</label>
    </interactant>
    <organismsDiffer>false</organismsDiffer>
    <experiments>3</experiments>
</comment>
<comment type="interaction">
    <interactant intactId="EBI-8656416">
        <id>Q68DK2-5</id>
    </interactant>
    <interactant intactId="EBI-10961706">
        <id>Q96ED9-2</id>
        <label>HOOK2</label>
    </interactant>
    <organismsDiffer>false</organismsDiffer>
    <experiments>3</experiments>
</comment>
<comment type="interaction">
    <interactant intactId="EBI-8656416">
        <id>Q68DK2-5</id>
    </interactant>
    <interactant intactId="EBI-739566">
        <id>P19012</id>
        <label>KRT15</label>
    </interactant>
    <organismsDiffer>false</organismsDiffer>
    <experiments>3</experiments>
</comment>
<comment type="interaction">
    <interactant intactId="EBI-8656416">
        <id>Q68DK2-5</id>
    </interactant>
    <interactant intactId="EBI-3044087">
        <id>Q7Z3Y8</id>
        <label>KRT27</label>
    </interactant>
    <organismsDiffer>false</organismsDiffer>
    <experiments>3</experiments>
</comment>
<comment type="interaction">
    <interactant intactId="EBI-8656416">
        <id>Q68DK2-5</id>
    </interactant>
    <interactant intactId="EBI-1047093">
        <id>O76011</id>
        <label>KRT34</label>
    </interactant>
    <organismsDiffer>false</organismsDiffer>
    <experiments>3</experiments>
</comment>
<comment type="interaction">
    <interactant intactId="EBI-8656416">
        <id>Q68DK2-5</id>
    </interactant>
    <interactant intactId="EBI-10171697">
        <id>Q6A162</id>
        <label>KRT40</label>
    </interactant>
    <organismsDiffer>false</organismsDiffer>
    <experiments>6</experiments>
</comment>
<comment type="interaction">
    <interactant intactId="EBI-8656416">
        <id>Q68DK2-5</id>
    </interactant>
    <interactant intactId="EBI-10172290">
        <id>P60409</id>
        <label>KRTAP10-7</label>
    </interactant>
    <organismsDiffer>false</organismsDiffer>
    <experiments>6</experiments>
</comment>
<comment type="interaction">
    <interactant intactId="EBI-8656416">
        <id>Q68DK2-5</id>
    </interactant>
    <interactant intactId="EBI-10172052">
        <id>P60411</id>
        <label>KRTAP10-9</label>
    </interactant>
    <organismsDiffer>false</organismsDiffer>
    <experiments>3</experiments>
</comment>
<comment type="interaction">
    <interactant intactId="EBI-8656416">
        <id>Q68DK2-5</id>
    </interactant>
    <interactant intactId="EBI-716006">
        <id>Q9Y5V3</id>
        <label>MAGED1</label>
    </interactant>
    <organismsDiffer>false</organismsDiffer>
    <experiments>3</experiments>
</comment>
<comment type="interaction">
    <interactant intactId="EBI-8656416">
        <id>Q68DK2-5</id>
    </interactant>
    <interactant intactId="EBI-724076">
        <id>Q99750</id>
        <label>MDFI</label>
    </interactant>
    <organismsDiffer>false</organismsDiffer>
    <experiments>7</experiments>
</comment>
<comment type="interaction">
    <interactant intactId="EBI-8656416">
        <id>Q68DK2-5</id>
    </interactant>
    <interactant intactId="EBI-742388">
        <id>Q9H8W4</id>
        <label>PLEKHF2</label>
    </interactant>
    <organismsDiffer>false</organismsDiffer>
    <experiments>3</experiments>
</comment>
<comment type="interaction">
    <interactant intactId="EBI-8656416">
        <id>Q68DK2-5</id>
    </interactant>
    <interactant intactId="EBI-302345">
        <id>Q8ND90</id>
        <label>PNMA1</label>
    </interactant>
    <organismsDiffer>false</organismsDiffer>
    <experiments>3</experiments>
</comment>
<comment type="interaction">
    <interactant intactId="EBI-8656416">
        <id>Q68DK2-5</id>
    </interactant>
    <interactant intactId="EBI-10171633">
        <id>Q96PV4</id>
        <label>PNMA5</label>
    </interactant>
    <organismsDiffer>false</organismsDiffer>
    <experiments>3</experiments>
</comment>
<comment type="interaction">
    <interactant intactId="EBI-8656416">
        <id>Q68DK2-5</id>
    </interactant>
    <interactant intactId="EBI-710402">
        <id>Q96I34</id>
        <label>PPP1R16A</label>
    </interactant>
    <organismsDiffer>false</organismsDiffer>
    <experiments>3</experiments>
</comment>
<comment type="interaction">
    <interactant intactId="EBI-8656416">
        <id>Q68DK2-5</id>
    </interactant>
    <interactant intactId="EBI-11320284">
        <id>Q9NQX0</id>
        <label>PRDM6</label>
    </interactant>
    <organismsDiffer>false</organismsDiffer>
    <experiments>3</experiments>
</comment>
<comment type="interaction">
    <interactant intactId="EBI-8656416">
        <id>Q68DK2-5</id>
    </interactant>
    <interactant intactId="EBI-742268">
        <id>O75478</id>
        <label>TADA2A</label>
    </interactant>
    <organismsDiffer>false</organismsDiffer>
    <experiments>3</experiments>
</comment>
<comment type="interaction">
    <interactant intactId="EBI-8656416">
        <id>Q68DK2-5</id>
    </interactant>
    <interactant intactId="EBI-11955057">
        <id>Q8N8B7-2</id>
        <label>TCEANC</label>
    </interactant>
    <organismsDiffer>false</organismsDiffer>
    <experiments>3</experiments>
</comment>
<comment type="interaction">
    <interactant intactId="EBI-8656416">
        <id>Q68DK2-5</id>
    </interactant>
    <interactant intactId="EBI-743494">
        <id>P48775</id>
        <label>TDO2</label>
    </interactant>
    <organismsDiffer>false</organismsDiffer>
    <experiments>6</experiments>
</comment>
<comment type="interaction">
    <interactant intactId="EBI-8656416">
        <id>Q68DK2-5</id>
    </interactant>
    <interactant intactId="EBI-1105213">
        <id>Q9UBB9</id>
        <label>TFIP11</label>
    </interactant>
    <organismsDiffer>false</organismsDiffer>
    <experiments>3</experiments>
</comment>
<comment type="interaction">
    <interactant intactId="EBI-8656416">
        <id>Q68DK2-5</id>
    </interactant>
    <interactant intactId="EBI-359224">
        <id>Q13077</id>
        <label>TRAF1</label>
    </interactant>
    <organismsDiffer>false</organismsDiffer>
    <experiments>3</experiments>
</comment>
<comment type="interaction">
    <interactant intactId="EBI-8656416">
        <id>Q68DK2-5</id>
    </interactant>
    <interactant intactId="EBI-9090990">
        <id>Q5W5X9-3</id>
        <label>TTC23</label>
    </interactant>
    <organismsDiffer>false</organismsDiffer>
    <experiments>3</experiments>
</comment>
<comment type="interaction">
    <interactant intactId="EBI-8656416">
        <id>Q68DK2-5</id>
    </interactant>
    <interactant intactId="EBI-739895">
        <id>Q8N6Y0</id>
        <label>USHBP1</label>
    </interactant>
    <organismsDiffer>false</organismsDiffer>
    <experiments>6</experiments>
</comment>
<comment type="interaction">
    <interactant intactId="EBI-8656416">
        <id>Q68DK2-5</id>
    </interactant>
    <interactant intactId="EBI-2511991">
        <id>Q9Y2K6</id>
        <label>USP20</label>
    </interactant>
    <organismsDiffer>false</organismsDiffer>
    <experiments>3</experiments>
</comment>
<comment type="subcellular location">
    <subcellularLocation>
        <location evidence="12">Cytoplasm</location>
        <location evidence="12">Cytoskeleton</location>
        <location evidence="12">Microtubule organizing center</location>
        <location evidence="12">Centrosome</location>
    </subcellularLocation>
    <subcellularLocation>
        <location evidence="12">Midbody</location>
    </subcellularLocation>
    <text>Localizes to the centrosome during all stages of the cell cycle. Recruited to the midbody during cytokinesis by KIF13A.</text>
</comment>
<comment type="alternative products">
    <event type="alternative splicing"/>
    <isoform>
        <id>Q68DK2-1</id>
        <name>1</name>
        <sequence type="displayed"/>
    </isoform>
    <isoform>
        <id>Q68DK2-2</id>
        <name>2</name>
        <sequence type="described" ref="VSP_030339"/>
    </isoform>
    <isoform>
        <id>Q68DK2-4</id>
        <name>4</name>
        <sequence type="described" ref="VSP_041049 VSP_041050"/>
    </isoform>
    <isoform>
        <id>Q68DK2-3</id>
        <name>3</name>
        <sequence type="described" ref="VSP_030338 VSP_030340 VSP_030341"/>
    </isoform>
    <isoform>
        <id>Q68DK2-5</id>
        <name>5</name>
        <sequence type="described" ref="VSP_058963 VSP_058964"/>
    </isoform>
</comment>
<comment type="tissue specificity">
    <text evidence="9">Strongest expression in the adrenal gland, bone marrow, adult brain, fetal brain, lung, placenta, prostate, skeletal muscle, testis, thymus, and retina. Intermediate levels are detected in other structures, including the spinal cord.</text>
</comment>
<comment type="domain">
    <text evidence="12">The FYVE-type zinc finger mediates binding to phosphatidylinositol 3-phosphate and recruitment to the midbody during cytokinesis.</text>
</comment>
<comment type="disease" evidence="9 10 11">
    <disease id="DI-01046">
        <name>Spastic paraplegia 15, autosomal recessive</name>
        <acronym>SPG15</acronym>
        <description>A form of spastic paraplegia, a neurodegenerative disorder characterized by a slow, gradual, progressive weakness and spasticity of the lower limbs. Rate of progression and the severity of symptoms are quite variable. Initial symptoms may include difficulty with balance, weakness and stiffness in the legs, muscle spasms, and dragging the toes when walking. In some forms of the disorder, bladder symptoms (such as incontinence) may appear, or the weakness and stiffness may spread to other parts of the body. SPG15 is a complex form associated with additional neurological symptoms such as cognitive deterioration or intellectual disability, axonal neuropathy, mild cerebellar signs, and, less frequently, a central hearing deficit, decreased visual acuity, or retinal degeneration.</description>
        <dbReference type="MIM" id="270700"/>
    </disease>
    <text>The disease is caused by variants affecting the gene represented in this entry.</text>
</comment>
<comment type="sequence caution" evidence="17">
    <conflict type="erroneous initiation">
        <sequence resource="EMBL-CDS" id="BAG11658"/>
    </conflict>
    <text>Extended N-terminus.</text>
</comment>
<comment type="sequence caution" evidence="17">
    <conflict type="erroneous termination">
        <sequence resource="EMBL-CDS" id="CAD97882"/>
    </conflict>
    <text>Truncated C-terminus.</text>
</comment>
<feature type="chain" id="PRO_0000314612" description="Zinc finger FYVE domain-containing protein 26">
    <location>
        <begin position="1"/>
        <end position="2539"/>
    </location>
</feature>
<feature type="zinc finger region" description="FYVE-type" evidence="4">
    <location>
        <begin position="1812"/>
        <end position="1872"/>
    </location>
</feature>
<feature type="region of interest" description="Disordered" evidence="5">
    <location>
        <begin position="594"/>
        <end position="637"/>
    </location>
</feature>
<feature type="region of interest" description="Disordered" evidence="5">
    <location>
        <begin position="699"/>
        <end position="724"/>
    </location>
</feature>
<feature type="region of interest" description="Disordered" evidence="5">
    <location>
        <begin position="738"/>
        <end position="806"/>
    </location>
</feature>
<feature type="region of interest" description="Disordered" evidence="5">
    <location>
        <begin position="1267"/>
        <end position="1296"/>
    </location>
</feature>
<feature type="region of interest" description="Disordered" evidence="5">
    <location>
        <begin position="1754"/>
        <end position="1808"/>
    </location>
</feature>
<feature type="coiled-coil region" evidence="3">
    <location>
        <begin position="868"/>
        <end position="895"/>
    </location>
</feature>
<feature type="compositionally biased region" description="Basic residues" evidence="5">
    <location>
        <begin position="764"/>
        <end position="774"/>
    </location>
</feature>
<feature type="compositionally biased region" description="Low complexity" evidence="5">
    <location>
        <begin position="787"/>
        <end position="805"/>
    </location>
</feature>
<feature type="compositionally biased region" description="Polar residues" evidence="5">
    <location>
        <begin position="1271"/>
        <end position="1282"/>
    </location>
</feature>
<feature type="compositionally biased region" description="Low complexity" evidence="5">
    <location>
        <begin position="1760"/>
        <end position="1769"/>
    </location>
</feature>
<feature type="binding site" evidence="4">
    <location>
        <position position="1818"/>
    </location>
    <ligand>
        <name>Zn(2+)</name>
        <dbReference type="ChEBI" id="CHEBI:29105"/>
        <label>1</label>
    </ligand>
</feature>
<feature type="binding site" evidence="4">
    <location>
        <position position="1821"/>
    </location>
    <ligand>
        <name>Zn(2+)</name>
        <dbReference type="ChEBI" id="CHEBI:29105"/>
        <label>1</label>
    </ligand>
</feature>
<feature type="binding site" evidence="4">
    <location>
        <position position="1835"/>
    </location>
    <ligand>
        <name>Zn(2+)</name>
        <dbReference type="ChEBI" id="CHEBI:29105"/>
        <label>2</label>
    </ligand>
</feature>
<feature type="binding site" evidence="4">
    <location>
        <position position="1838"/>
    </location>
    <ligand>
        <name>Zn(2+)</name>
        <dbReference type="ChEBI" id="CHEBI:29105"/>
        <label>2</label>
    </ligand>
</feature>
<feature type="binding site" evidence="4">
    <location>
        <position position="1843"/>
    </location>
    <ligand>
        <name>Zn(2+)</name>
        <dbReference type="ChEBI" id="CHEBI:29105"/>
        <label>1</label>
    </ligand>
</feature>
<feature type="binding site" evidence="4">
    <location>
        <position position="1846"/>
    </location>
    <ligand>
        <name>Zn(2+)</name>
        <dbReference type="ChEBI" id="CHEBI:29105"/>
        <label>1</label>
    </ligand>
</feature>
<feature type="binding site" evidence="4">
    <location>
        <position position="1864"/>
    </location>
    <ligand>
        <name>Zn(2+)</name>
        <dbReference type="ChEBI" id="CHEBI:29105"/>
        <label>2</label>
    </ligand>
</feature>
<feature type="binding site" evidence="4">
    <location>
        <position position="1867"/>
    </location>
    <ligand>
        <name>Zn(2+)</name>
        <dbReference type="ChEBI" id="CHEBI:29105"/>
        <label>2</label>
    </ligand>
</feature>
<feature type="modified residue" description="Phosphoserine" evidence="18">
    <location>
        <position position="297"/>
    </location>
</feature>
<feature type="modified residue" description="Phosphoserine" evidence="1">
    <location>
        <position position="615"/>
    </location>
</feature>
<feature type="modified residue" description="Phosphoserine" evidence="18">
    <location>
        <position position="619"/>
    </location>
</feature>
<feature type="modified residue" description="Phosphoserine" evidence="18">
    <location>
        <position position="703"/>
    </location>
</feature>
<feature type="modified residue" description="Phosphoserine" evidence="18">
    <location>
        <position position="800"/>
    </location>
</feature>
<feature type="modified residue" description="Phosphoserine" evidence="2">
    <location>
        <position position="1742"/>
    </location>
</feature>
<feature type="modified residue" description="Phosphoserine" evidence="18">
    <location>
        <position position="1764"/>
    </location>
</feature>
<feature type="modified residue" description="Phosphoserine" evidence="2">
    <location>
        <position position="1780"/>
    </location>
</feature>
<feature type="modified residue" description="Phosphoserine" evidence="2">
    <location>
        <position position="1782"/>
    </location>
</feature>
<feature type="splice variant" id="VSP_030338" description="In isoform 3." evidence="15">
    <location>
        <begin position="1"/>
        <end position="1809"/>
    </location>
</feature>
<feature type="splice variant" id="VSP_030339" description="In isoform 2." evidence="16">
    <location>
        <begin position="203"/>
        <end position="223"/>
    </location>
</feature>
<feature type="splice variant" id="VSP_041049" description="In isoform 4." evidence="15">
    <original>DGRDRGSNPSLEST</original>
    <variation>GNLKSSFPCTRQVV</variation>
    <location>
        <begin position="778"/>
        <end position="791"/>
    </location>
</feature>
<feature type="splice variant" id="VSP_041050" description="In isoform 4." evidence="15">
    <location>
        <begin position="792"/>
        <end position="2539"/>
    </location>
</feature>
<feature type="splice variant" id="VSP_030340" description="In isoform 3." evidence="15">
    <original>VPDETESICMVCCREHFTM</original>
    <variation>MAISPSLLPLSSPPDGIPQ</variation>
    <location>
        <begin position="1810"/>
        <end position="1828"/>
    </location>
</feature>
<feature type="splice variant" id="VSP_030341" description="In isoform 3." evidence="15">
    <original>VRAYLICCKLRSAYLIAVKQEHSRATALVQQVQQAAKSSGDAVVQDICAQWLLTSHPRGAHGPGSRK</original>
    <variation>IVPILAALRDRVHTEERGRSPSTLC</variation>
    <location>
        <begin position="2473"/>
        <end position="2539"/>
    </location>
</feature>
<feature type="splice variant" id="VSP_058963" description="In isoform 5.">
    <original>RAYLICCK</original>
    <variation>SGIVSKRW</variation>
    <location>
        <begin position="2474"/>
        <end position="2481"/>
    </location>
</feature>
<feature type="splice variant" id="VSP_058964" description="In isoform 5.">
    <location>
        <begin position="2482"/>
        <end position="2539"/>
    </location>
</feature>
<feature type="sequence variant" id="VAR_037987" description="In dbSNP:rs34059852.">
    <original>K</original>
    <variation>E</variation>
    <location>
        <position position="429"/>
    </location>
</feature>
<feature type="sequence variant" id="VAR_037988" description="In dbSNP:rs17192170.">
    <original>T</original>
    <variation>S</variation>
    <location>
        <position position="898"/>
    </location>
</feature>
<feature type="sequence variant" id="VAR_037989" description="In dbSNP:rs35471427.">
    <original>T</original>
    <variation>M</variation>
    <location>
        <position position="951"/>
    </location>
</feature>
<feature type="sequence variant" id="VAR_037990" description="In dbSNP:rs7156206.">
    <original>S</original>
    <variation>N</variation>
    <location>
        <position position="1071"/>
    </location>
</feature>
<feature type="sequence variant" id="VAR_037991" description="In dbSNP:rs3742885." evidence="8">
    <original>P</original>
    <variation>L</variation>
    <location>
        <position position="1103"/>
    </location>
</feature>
<feature type="sequence variant" id="VAR_037992" description="In dbSNP:rs3742884.">
    <original>A</original>
    <variation>V</variation>
    <location>
        <position position="1122"/>
    </location>
</feature>
<feature type="sequence variant" id="VAR_037993" description="In a breast cancer sample; somatic mutation." evidence="7">
    <original>A</original>
    <variation>E</variation>
    <location>
        <position position="1164"/>
    </location>
</feature>
<feature type="sequence variant" id="VAR_037994" description="In dbSNP:rs2235967." evidence="8 14">
    <original>C</original>
    <variation>Y</variation>
    <location>
        <position position="1457"/>
    </location>
</feature>
<feature type="sequence variant" id="VAR_037995" description="In dbSNP:rs3742883." evidence="6 14">
    <original>N</original>
    <variation>S</variation>
    <location>
        <position position="1891"/>
    </location>
</feature>
<feature type="sequence variant" id="VAR_037996" description="In a breast cancer sample; somatic mutation; dbSNP:rs200595749." evidence="7">
    <original>R</original>
    <variation>Q</variation>
    <location>
        <position position="1945"/>
    </location>
</feature>
<feature type="sequence variant" id="VAR_037997" description="In dbSNP:rs34373049.">
    <original>R</original>
    <variation>H</variation>
    <location>
        <position position="2411"/>
    </location>
</feature>
<feature type="mutagenesis site" description="Abolishes phosphatidylinositol 3-phosphate-binding and localization to the midbody." evidence="12">
    <original>R</original>
    <variation>A</variation>
    <location>
        <position position="1836"/>
    </location>
</feature>
<feature type="sequence conflict" description="In Ref. 3; CAD97882." evidence="17" ref="3">
    <original>L</original>
    <variation>P</variation>
    <location>
        <position position="243"/>
    </location>
</feature>
<feature type="sequence conflict" description="In Ref. 1; BAG11658." evidence="17" ref="1">
    <original>L</original>
    <variation>P</variation>
    <location>
        <position position="556"/>
    </location>
</feature>
<feature type="sequence conflict" description="In Ref. 3; CAH18131." evidence="17" ref="3">
    <original>S</original>
    <variation>P</variation>
    <location>
        <position position="586"/>
    </location>
</feature>
<feature type="sequence conflict" description="In Ref. 3; CAH18131." evidence="17" ref="3">
    <original>K</original>
    <variation>E</variation>
    <location>
        <position position="629"/>
    </location>
</feature>
<feature type="sequence conflict" description="In Ref. 3; CAH18218." evidence="17" ref="3">
    <original>D</original>
    <variation>G</variation>
    <location>
        <position position="946"/>
    </location>
</feature>
<feature type="sequence conflict" description="In Ref. 1; BAG11658." evidence="17" ref="1">
    <original>S</original>
    <variation>T</variation>
    <location>
        <position position="1040"/>
    </location>
</feature>
<feature type="sequence conflict" description="In Ref. 3; CAH18131." evidence="17" ref="3">
    <original>A</original>
    <variation>T</variation>
    <location>
        <position position="1115"/>
    </location>
</feature>
<feature type="sequence conflict" description="In Ref. 3; CAH18218." evidence="17" ref="3">
    <original>C</original>
    <variation>S</variation>
    <location>
        <position position="1320"/>
    </location>
</feature>
<feature type="sequence conflict" description="In Ref. 3; CAH18131." evidence="17" ref="3">
    <original>R</original>
    <variation>H</variation>
    <location>
        <position position="1358"/>
    </location>
</feature>
<feature type="sequence conflict" description="In Ref. 3; CAH18131." evidence="17" ref="3">
    <original>E</original>
    <variation>V</variation>
    <location>
        <position position="1556"/>
    </location>
</feature>
<feature type="sequence conflict" description="In Ref. 3; CAH10379." evidence="17" ref="3">
    <original>A</original>
    <variation>T</variation>
    <location>
        <position position="1597"/>
    </location>
</feature>
<feature type="sequence conflict" description="In Ref. 3; CAH10379." evidence="17" ref="3">
    <original>E</original>
    <variation>K</variation>
    <location>
        <position position="1615"/>
    </location>
</feature>
<feature type="sequence conflict" description="In Ref. 3; CAH18218." evidence="17" ref="3">
    <original>S</original>
    <variation>N</variation>
    <location>
        <position position="1670"/>
    </location>
</feature>
<feature type="sequence conflict" description="In Ref. 3; CAH10379." evidence="17" ref="3">
    <original>K</original>
    <variation>R</variation>
    <location>
        <position position="1727"/>
    </location>
</feature>
<feature type="sequence conflict" description="In Ref. 3; CAD97882." evidence="17" ref="3">
    <original>G</original>
    <variation>D</variation>
    <location>
        <position position="1774"/>
    </location>
</feature>
<feature type="sequence conflict" description="In Ref. 3; CAH18131." evidence="17" ref="3">
    <original>Q</original>
    <variation>L</variation>
    <location>
        <position position="2246"/>
    </location>
</feature>
<feature type="sequence conflict" description="In Ref. 3; CAD97882." evidence="17" ref="3">
    <original>K</original>
    <variation>R</variation>
    <location>
        <position position="2288"/>
    </location>
</feature>
<feature type="sequence conflict" description="In Ref. 6; AAH33235." evidence="17" ref="6">
    <original>M</original>
    <variation>L</variation>
    <location>
        <position position="2434"/>
    </location>
</feature>
<sequence>MNHPFGKEEAASQKQLFGFFCECLRRGEWELAQACVPQLQEGQGDIPKRVEDILQALVVCPNLLRCGQDINPQRVAWVWLLVLEKWLAREKKLLPVVFRRKLEFLLLSEDLQGDIPENILEELYETLTQGAVGHVPDGNPRRESWTPRLSSEAVSVLWDLLRQSPQPAQALLELLLEEDDGTGLCHWPLQNALVDLIRKALRALQGPDSVPPGVVDAIYGALRTLRCPAEPLGVELHLLCEELLEACRTEGSPLREERLLSCLLHKASRGLLSLYGHTYAEKVTEKPPRATASGKVSPDHLDPERAMLALFSNPNPAEAWKVAYFYCLSNNKHFLEQILVTALTLLKEEDFPNLGCLLDREFRPLSCLLVLLGWTHCQSLESAKRLLQTLHRTQGPGCDELLRDACDGLWAHLEVLEWCIQQSSNPIPKRDLLYHLHGGDSHSVLYTLHHLTNLPALREEDVLKLLQKVPAKDPQQEPDAVDAPVPEHLSQCQNLTLYQGFCAMKYAIYALCVNSHQHSQCQDCKDSLSEDLASATEPANDSLSSPGAANLFSTYLARCQQYLCSIPDSLCLELLENIFSLLLITSADLHPEPHLPEDYAEDDDIEGKSPSGLRSPSESPQHIAHPERKSERGSLGVPKTLAYTMPSHVKAEPKDSYPGPHRHSFLDLKHFTSGISGFLADEFAIGAFLRLLQEQLDEISSRSPPEKPKQESQSCSGSRDGLQSRLHRLSKVVSEAQWRHKVVTSNHRSEEQPSRRYQPATRHPSLRRGRRTRRSQADGRDRGSNPSLESTSSELSTSTSEGSLSAMSGRNELHSRLHPHPQSSLIPMMFSPPESLLASCILRGNFAEAHQVLFTFNLKSSPSSGELMFMERYQEVIQELAQVEHKIENQNSDAGSSTIRRTGSGRSTLQAIGSAAAAGMVFYSISDVTDKLLNTSGDPIPMLQEDFWISTALVEPTAPLREVLEDLSPPAMAAFDLACSQCQLWKTCKQLLETAERRLNSSLERRGRRIDHVLLNADGIRGFPVVLQQISKSLNYLLMSASQTKSESVEEKGGGPPRCSITELLQMCWPSLSEDCVASHTTLSQQLDQVLQSLREALELPEPRTPPLSSLVEQAAQKAPEAEAHPVQIQTQLLQKNLGKQTPSGSRQMDYLGTFFSYCSTLAAVLLQSLSSEPDHVEVKVGNPFVLLQQSSSQLVSHLLFERQVPPERLAALLAQENLSLSVPQVIVSCCCEPLALCSSRQSQQTSSLLTRLGTLAQLHASHCLDDLPLSTPSSPRTTENPTLERKPYSSPRDSSLPALTSSALAFLKSRSKLLATVACLGASPRLKVSKPSLSWKELRGRREVPLAAEQVARECERLLEQFPLFEAFLLAAWEPLRGSLQQGQSLAVNLCGWASLSTVLLGLHSPIALDVLSEAFEESLVARDWSRALQLTEVYGRDVDDLSSIKDAVLSCAVACDKEGWQYLFPVKDASLRSRLALQFVDRWPLESCLEILAYCISDTAVQEGLKCELQRKLAELQVYQKILGLQSPPVWCDWQTLRSCCVEDPSTVMNMILEAQEYELCEEWGCLYPIPREHLISLHQKHLLHLLERRDHDKALQLLRRIPDPTMCLEVTEQSLDQHTSLATSHFLANYLTTHFYGQLTAVRHREIQALYVGSKILLTLPEQHRASYSHLSSNPLFMLEQLLMNMKVDWATVAVQTLQQLLVGQEIGFTMDEVDSLLSRYAEKALDFPYPQREKRSDSVIHLQEIVHQAADPETLPRSPSAEFSPAAPPGISSIHSPSLRERSFPPTQPSQEFVPPATPPARHQWVPDETESICMVCCREHFTMFNRRHHCRRCGRLVCSSCSTKKMVVEGCRENPARVCDQCYSYCNKDVPEEPSEKPEALDSSKNESPPYSFVVRVPKADEVEWILDLKEEENELVRSEFYYEQAPSASLCIAILNLHRDSIACGHQLIEHCCRLSKGLTNPEVDAGLLTDIMKQLLFSAKMMFVKAGQSQDLALCDSYISKVDVLNILVAAAYRHVPSLDQILQPAAVTRLRNQLLEAEYYQLGVEVSTKTGLDTTGAWHAWGMACLKAGNLTAAREKFSRCLKPPFDLNQLNHGSRLVQDVVEYLESTVRPFVSLQDDDYFATLRELEATLRTQSLSLAVIPEGKIMNNTYYQECLFYLHNYSTNLAIISFYVRHSCLREALLHLLNKESPPEVFIEGIFQPSYKSGKLHTLENLLESIDPTLESWGKYLIAACQHLQKKNYYHILYELQQFMKDQVRAAMTCIRFFSHKAKSYTELGEKLSWLLKAKDHLKIYLQETSRSSGRKKTTFFRKKMTAADVSRHMNTLQLQMEVTRFLHRCESAGTSQITTLPLPTLFGNNHMKMDVACKVMLGGKNVEDGFGIAFRVLQDFQLDAAMTYCRAARQLVEKEKYSEIQQLLKCVSESGMAAKSDGDTILLNCLEAFKRIPPQELEGLIQAIHNDDNKVRAYLICCKLRSAYLIAVKQEHSRATALVQQVQQAAKSSGDAVVQDICAQWLLTSHPRGAHGPGSRK</sequence>
<dbReference type="EMBL" id="AB002319">
    <property type="protein sequence ID" value="BAA20779.1"/>
    <property type="molecule type" value="mRNA"/>
</dbReference>
<dbReference type="EMBL" id="AB425197">
    <property type="protein sequence ID" value="BAG11658.1"/>
    <property type="status" value="ALT_INIT"/>
    <property type="molecule type" value="mRNA"/>
</dbReference>
<dbReference type="EMBL" id="AK304428">
    <property type="protein sequence ID" value="BAG65255.1"/>
    <property type="molecule type" value="mRNA"/>
</dbReference>
<dbReference type="EMBL" id="AK128496">
    <property type="protein sequence ID" value="BAC87467.1"/>
    <property type="molecule type" value="mRNA"/>
</dbReference>
<dbReference type="EMBL" id="BX537886">
    <property type="protein sequence ID" value="CAD97882.1"/>
    <property type="status" value="ALT_SEQ"/>
    <property type="molecule type" value="mRNA"/>
</dbReference>
<dbReference type="EMBL" id="BX538025">
    <property type="protein sequence ID" value="CAD97971.1"/>
    <property type="molecule type" value="mRNA"/>
</dbReference>
<dbReference type="EMBL" id="BX648683">
    <property type="protein sequence ID" value="CAH10379.1"/>
    <property type="molecule type" value="mRNA"/>
</dbReference>
<dbReference type="EMBL" id="CR749276">
    <property type="protein sequence ID" value="CAH18131.1"/>
    <property type="molecule type" value="mRNA"/>
</dbReference>
<dbReference type="EMBL" id="CR749365">
    <property type="protein sequence ID" value="CAH18218.1"/>
    <property type="molecule type" value="mRNA"/>
</dbReference>
<dbReference type="EMBL" id="AL049779">
    <property type="status" value="NOT_ANNOTATED_CDS"/>
    <property type="molecule type" value="Genomic_DNA"/>
</dbReference>
<dbReference type="EMBL" id="AL121595">
    <property type="status" value="NOT_ANNOTATED_CDS"/>
    <property type="molecule type" value="Genomic_DNA"/>
</dbReference>
<dbReference type="EMBL" id="CH471061">
    <property type="protein sequence ID" value="EAW80954.1"/>
    <property type="molecule type" value="Genomic_DNA"/>
</dbReference>
<dbReference type="EMBL" id="BC008927">
    <property type="protein sequence ID" value="AAH08927.2"/>
    <property type="molecule type" value="mRNA"/>
</dbReference>
<dbReference type="EMBL" id="BC033235">
    <property type="protein sequence ID" value="AAH33235.2"/>
    <property type="molecule type" value="mRNA"/>
</dbReference>
<dbReference type="CCDS" id="CCDS9788.1">
    <molecule id="Q68DK2-1"/>
</dbReference>
<dbReference type="RefSeq" id="NP_056161.2">
    <molecule id="Q68DK2-1"/>
    <property type="nucleotide sequence ID" value="NM_015346.3"/>
</dbReference>
<dbReference type="BioGRID" id="117050">
    <property type="interactions" value="53"/>
</dbReference>
<dbReference type="CORUM" id="Q68DK2"/>
<dbReference type="FunCoup" id="Q68DK2">
    <property type="interactions" value="1999"/>
</dbReference>
<dbReference type="IntAct" id="Q68DK2">
    <property type="interactions" value="47"/>
</dbReference>
<dbReference type="MINT" id="Q68DK2"/>
<dbReference type="STRING" id="9606.ENSP00000251119"/>
<dbReference type="GlyGen" id="Q68DK2">
    <property type="glycosylation" value="4 sites, 2 N-linked glycans (1 site), 1 O-linked glycan (2 sites)"/>
</dbReference>
<dbReference type="iPTMnet" id="Q68DK2"/>
<dbReference type="PhosphoSitePlus" id="Q68DK2"/>
<dbReference type="SwissPalm" id="Q68DK2"/>
<dbReference type="BioMuta" id="ZFYVE26"/>
<dbReference type="DMDM" id="296453077"/>
<dbReference type="jPOST" id="Q68DK2"/>
<dbReference type="MassIVE" id="Q68DK2"/>
<dbReference type="PaxDb" id="9606-ENSP00000251119"/>
<dbReference type="PeptideAtlas" id="Q68DK2"/>
<dbReference type="ProteomicsDB" id="66082">
    <molecule id="Q68DK2-1"/>
</dbReference>
<dbReference type="ProteomicsDB" id="66083">
    <molecule id="Q68DK2-2"/>
</dbReference>
<dbReference type="ProteomicsDB" id="66084">
    <molecule id="Q68DK2-3"/>
</dbReference>
<dbReference type="ProteomicsDB" id="66085">
    <molecule id="Q68DK2-4"/>
</dbReference>
<dbReference type="ProteomicsDB" id="76701"/>
<dbReference type="Pumba" id="Q68DK2"/>
<dbReference type="Antibodypedia" id="24903">
    <property type="antibodies" value="73 antibodies from 25 providers"/>
</dbReference>
<dbReference type="DNASU" id="23503"/>
<dbReference type="Ensembl" id="ENST00000347230.9">
    <molecule id="Q68DK2-1"/>
    <property type="protein sequence ID" value="ENSP00000251119.5"/>
    <property type="gene ID" value="ENSG00000072121.17"/>
</dbReference>
<dbReference type="GeneID" id="23503"/>
<dbReference type="KEGG" id="hsa:23503"/>
<dbReference type="MANE-Select" id="ENST00000347230.9">
    <property type="protein sequence ID" value="ENSP00000251119.5"/>
    <property type="RefSeq nucleotide sequence ID" value="NM_015346.4"/>
    <property type="RefSeq protein sequence ID" value="NP_056161.2"/>
</dbReference>
<dbReference type="UCSC" id="uc001xka.2">
    <molecule id="Q68DK2-1"/>
    <property type="organism name" value="human"/>
</dbReference>
<dbReference type="UCSC" id="uc001xkb.4">
    <property type="organism name" value="human"/>
</dbReference>
<dbReference type="AGR" id="HGNC:20761"/>
<dbReference type="CTD" id="23503"/>
<dbReference type="DisGeNET" id="23503"/>
<dbReference type="GeneCards" id="ZFYVE26"/>
<dbReference type="GeneReviews" id="ZFYVE26"/>
<dbReference type="HGNC" id="HGNC:20761">
    <property type="gene designation" value="ZFYVE26"/>
</dbReference>
<dbReference type="HPA" id="ENSG00000072121">
    <property type="expression patterns" value="Low tissue specificity"/>
</dbReference>
<dbReference type="MalaCards" id="ZFYVE26"/>
<dbReference type="MIM" id="270700">
    <property type="type" value="phenotype"/>
</dbReference>
<dbReference type="MIM" id="612012">
    <property type="type" value="gene"/>
</dbReference>
<dbReference type="neXtProt" id="NX_Q68DK2"/>
<dbReference type="OpenTargets" id="ENSG00000072121"/>
<dbReference type="Orphanet" id="100996">
    <property type="disease" value="Autosomal recessive spastic paraplegia type 15"/>
</dbReference>
<dbReference type="PharmGKB" id="PA134904455"/>
<dbReference type="VEuPathDB" id="HostDB:ENSG00000072121"/>
<dbReference type="eggNOG" id="KOG1811">
    <property type="taxonomic scope" value="Eukaryota"/>
</dbReference>
<dbReference type="GeneTree" id="ENSGT00920000149143"/>
<dbReference type="HOGENOM" id="CLU_228199_0_0_1"/>
<dbReference type="InParanoid" id="Q68DK2"/>
<dbReference type="OrthoDB" id="1936617at2759"/>
<dbReference type="PAN-GO" id="Q68DK2">
    <property type="GO annotations" value="4 GO annotations based on evolutionary models"/>
</dbReference>
<dbReference type="PhylomeDB" id="Q68DK2"/>
<dbReference type="TreeFam" id="TF324517"/>
<dbReference type="PathwayCommons" id="Q68DK2"/>
<dbReference type="SignaLink" id="Q68DK2"/>
<dbReference type="SIGNOR" id="Q68DK2"/>
<dbReference type="BioGRID-ORCS" id="23503">
    <property type="hits" value="16 hits in 1159 CRISPR screens"/>
</dbReference>
<dbReference type="CD-CODE" id="8C2F96ED">
    <property type="entry name" value="Centrosome"/>
</dbReference>
<dbReference type="ChiTaRS" id="ZFYVE26">
    <property type="organism name" value="human"/>
</dbReference>
<dbReference type="GenomeRNAi" id="23503"/>
<dbReference type="Pharos" id="Q68DK2">
    <property type="development level" value="Tbio"/>
</dbReference>
<dbReference type="PRO" id="PR:Q68DK2"/>
<dbReference type="Proteomes" id="UP000005640">
    <property type="component" value="Chromosome 14"/>
</dbReference>
<dbReference type="RNAct" id="Q68DK2">
    <property type="molecule type" value="protein"/>
</dbReference>
<dbReference type="Bgee" id="ENSG00000072121">
    <property type="expression patterns" value="Expressed in sural nerve and 203 other cell types or tissues"/>
</dbReference>
<dbReference type="ExpressionAtlas" id="Q68DK2">
    <property type="expression patterns" value="baseline and differential"/>
</dbReference>
<dbReference type="GO" id="GO:0005813">
    <property type="term" value="C:centrosome"/>
    <property type="evidence" value="ECO:0000314"/>
    <property type="project" value="UniProtKB"/>
</dbReference>
<dbReference type="GO" id="GO:0005769">
    <property type="term" value="C:early endosome"/>
    <property type="evidence" value="ECO:0000314"/>
    <property type="project" value="MGI"/>
</dbReference>
<dbReference type="GO" id="GO:0005770">
    <property type="term" value="C:late endosome"/>
    <property type="evidence" value="ECO:0000314"/>
    <property type="project" value="MGI"/>
</dbReference>
<dbReference type="GO" id="GO:0005765">
    <property type="term" value="C:lysosomal membrane"/>
    <property type="evidence" value="ECO:0007005"/>
    <property type="project" value="UniProtKB"/>
</dbReference>
<dbReference type="GO" id="GO:0005764">
    <property type="term" value="C:lysosome"/>
    <property type="evidence" value="ECO:0000314"/>
    <property type="project" value="MGI"/>
</dbReference>
<dbReference type="GO" id="GO:0030496">
    <property type="term" value="C:midbody"/>
    <property type="evidence" value="ECO:0000314"/>
    <property type="project" value="UniProtKB"/>
</dbReference>
<dbReference type="GO" id="GO:0032266">
    <property type="term" value="F:phosphatidylinositol-3-phosphate binding"/>
    <property type="evidence" value="ECO:0000314"/>
    <property type="project" value="UniProtKB"/>
</dbReference>
<dbReference type="GO" id="GO:0019901">
    <property type="term" value="F:protein kinase binding"/>
    <property type="evidence" value="ECO:0000314"/>
    <property type="project" value="MGI"/>
</dbReference>
<dbReference type="GO" id="GO:0008270">
    <property type="term" value="F:zinc ion binding"/>
    <property type="evidence" value="ECO:0007669"/>
    <property type="project" value="UniProtKB-KW"/>
</dbReference>
<dbReference type="GO" id="GO:1905037">
    <property type="term" value="P:autophagosome organization"/>
    <property type="evidence" value="ECO:0000314"/>
    <property type="project" value="MGI"/>
</dbReference>
<dbReference type="GO" id="GO:0000724">
    <property type="term" value="P:double-strand break repair via homologous recombination"/>
    <property type="evidence" value="ECO:0000315"/>
    <property type="project" value="UniProtKB"/>
</dbReference>
<dbReference type="GO" id="GO:0007040">
    <property type="term" value="P:lysosome organization"/>
    <property type="evidence" value="ECO:0000314"/>
    <property type="project" value="MGI"/>
</dbReference>
<dbReference type="GO" id="GO:0000281">
    <property type="term" value="P:mitotic cytokinesis"/>
    <property type="evidence" value="ECO:0007669"/>
    <property type="project" value="InterPro"/>
</dbReference>
<dbReference type="GO" id="GO:0032465">
    <property type="term" value="P:regulation of cytokinesis"/>
    <property type="evidence" value="ECO:0000315"/>
    <property type="project" value="UniProtKB"/>
</dbReference>
<dbReference type="CDD" id="cd15724">
    <property type="entry name" value="FYVE_ZFY26"/>
    <property type="match status" value="1"/>
</dbReference>
<dbReference type="FunFam" id="3.30.40.10:FF:000295">
    <property type="entry name" value="Zinc finger, FYVE domain-containing 26"/>
    <property type="match status" value="1"/>
</dbReference>
<dbReference type="Gene3D" id="3.30.40.10">
    <property type="entry name" value="Zinc/RING finger domain, C3HC4 (zinc finger)"/>
    <property type="match status" value="1"/>
</dbReference>
<dbReference type="InterPro" id="IPR028730">
    <property type="entry name" value="ZFYVE26"/>
</dbReference>
<dbReference type="InterPro" id="IPR000306">
    <property type="entry name" value="Znf_FYVE"/>
</dbReference>
<dbReference type="InterPro" id="IPR017455">
    <property type="entry name" value="Znf_FYVE-rel"/>
</dbReference>
<dbReference type="InterPro" id="IPR011011">
    <property type="entry name" value="Znf_FYVE_PHD"/>
</dbReference>
<dbReference type="InterPro" id="IPR013083">
    <property type="entry name" value="Znf_RING/FYVE/PHD"/>
</dbReference>
<dbReference type="PANTHER" id="PTHR46591">
    <property type="entry name" value="ZINC FINGER FYVE DOMAIN-CONTAINING PROTEIN 26"/>
    <property type="match status" value="1"/>
</dbReference>
<dbReference type="PANTHER" id="PTHR46591:SF1">
    <property type="entry name" value="ZINC FINGER FYVE DOMAIN-CONTAINING PROTEIN 26"/>
    <property type="match status" value="1"/>
</dbReference>
<dbReference type="Pfam" id="PF01363">
    <property type="entry name" value="FYVE"/>
    <property type="match status" value="1"/>
</dbReference>
<dbReference type="SMART" id="SM00064">
    <property type="entry name" value="FYVE"/>
    <property type="match status" value="1"/>
</dbReference>
<dbReference type="SUPFAM" id="SSF57903">
    <property type="entry name" value="FYVE/PHD zinc finger"/>
    <property type="match status" value="1"/>
</dbReference>
<dbReference type="PROSITE" id="PS50178">
    <property type="entry name" value="ZF_FYVE"/>
    <property type="match status" value="1"/>
</dbReference>